<dbReference type="EC" id="2.7.7.23" evidence="1"/>
<dbReference type="EC" id="2.3.1.157" evidence="1"/>
<dbReference type="EMBL" id="AE000512">
    <property type="protein sequence ID" value="AAD36696.1"/>
    <property type="molecule type" value="Genomic_DNA"/>
</dbReference>
<dbReference type="PIR" id="E72229">
    <property type="entry name" value="E72229"/>
</dbReference>
<dbReference type="RefSeq" id="NP_229429.1">
    <property type="nucleotide sequence ID" value="NC_000853.1"/>
</dbReference>
<dbReference type="RefSeq" id="WP_004082105.1">
    <property type="nucleotide sequence ID" value="NC_000853.1"/>
</dbReference>
<dbReference type="SMR" id="Q9X1W4"/>
<dbReference type="FunCoup" id="Q9X1W4">
    <property type="interactions" value="283"/>
</dbReference>
<dbReference type="STRING" id="243274.TM_1629"/>
<dbReference type="PaxDb" id="243274-THEMA_06100"/>
<dbReference type="EnsemblBacteria" id="AAD36696">
    <property type="protein sequence ID" value="AAD36696"/>
    <property type="gene ID" value="TM_1629"/>
</dbReference>
<dbReference type="KEGG" id="tma:TM1629"/>
<dbReference type="KEGG" id="tmi:THEMA_06100"/>
<dbReference type="KEGG" id="tmm:Tmari_1638"/>
<dbReference type="KEGG" id="tmw:THMA_1670"/>
<dbReference type="eggNOG" id="COG1207">
    <property type="taxonomic scope" value="Bacteria"/>
</dbReference>
<dbReference type="InParanoid" id="Q9X1W4"/>
<dbReference type="OrthoDB" id="9775031at2"/>
<dbReference type="UniPathway" id="UPA00113">
    <property type="reaction ID" value="UER00532"/>
</dbReference>
<dbReference type="UniPathway" id="UPA00113">
    <property type="reaction ID" value="UER00533"/>
</dbReference>
<dbReference type="UniPathway" id="UPA00973"/>
<dbReference type="Proteomes" id="UP000008183">
    <property type="component" value="Chromosome"/>
</dbReference>
<dbReference type="GO" id="GO:0005737">
    <property type="term" value="C:cytoplasm"/>
    <property type="evidence" value="ECO:0007669"/>
    <property type="project" value="UniProtKB-SubCell"/>
</dbReference>
<dbReference type="GO" id="GO:0016020">
    <property type="term" value="C:membrane"/>
    <property type="evidence" value="ECO:0007669"/>
    <property type="project" value="GOC"/>
</dbReference>
<dbReference type="GO" id="GO:0019134">
    <property type="term" value="F:glucosamine-1-phosphate N-acetyltransferase activity"/>
    <property type="evidence" value="ECO:0007669"/>
    <property type="project" value="UniProtKB-UniRule"/>
</dbReference>
<dbReference type="GO" id="GO:0000287">
    <property type="term" value="F:magnesium ion binding"/>
    <property type="evidence" value="ECO:0007669"/>
    <property type="project" value="UniProtKB-UniRule"/>
</dbReference>
<dbReference type="GO" id="GO:0003977">
    <property type="term" value="F:UDP-N-acetylglucosamine diphosphorylase activity"/>
    <property type="evidence" value="ECO:0007669"/>
    <property type="project" value="UniProtKB-UniRule"/>
</dbReference>
<dbReference type="GO" id="GO:0000902">
    <property type="term" value="P:cell morphogenesis"/>
    <property type="evidence" value="ECO:0007669"/>
    <property type="project" value="UniProtKB-UniRule"/>
</dbReference>
<dbReference type="GO" id="GO:0071555">
    <property type="term" value="P:cell wall organization"/>
    <property type="evidence" value="ECO:0007669"/>
    <property type="project" value="UniProtKB-KW"/>
</dbReference>
<dbReference type="GO" id="GO:0009245">
    <property type="term" value="P:lipid A biosynthetic process"/>
    <property type="evidence" value="ECO:0007669"/>
    <property type="project" value="UniProtKB-UniRule"/>
</dbReference>
<dbReference type="GO" id="GO:0009252">
    <property type="term" value="P:peptidoglycan biosynthetic process"/>
    <property type="evidence" value="ECO:0007669"/>
    <property type="project" value="UniProtKB-UniRule"/>
</dbReference>
<dbReference type="GO" id="GO:0008360">
    <property type="term" value="P:regulation of cell shape"/>
    <property type="evidence" value="ECO:0007669"/>
    <property type="project" value="UniProtKB-KW"/>
</dbReference>
<dbReference type="GO" id="GO:0006048">
    <property type="term" value="P:UDP-N-acetylglucosamine biosynthetic process"/>
    <property type="evidence" value="ECO:0007669"/>
    <property type="project" value="UniProtKB-UniPathway"/>
</dbReference>
<dbReference type="CDD" id="cd02540">
    <property type="entry name" value="GT2_GlmU_N_bac"/>
    <property type="match status" value="1"/>
</dbReference>
<dbReference type="CDD" id="cd03353">
    <property type="entry name" value="LbH_GlmU_C"/>
    <property type="match status" value="1"/>
</dbReference>
<dbReference type="Gene3D" id="2.160.10.10">
    <property type="entry name" value="Hexapeptide repeat proteins"/>
    <property type="match status" value="1"/>
</dbReference>
<dbReference type="Gene3D" id="3.90.550.10">
    <property type="entry name" value="Spore Coat Polysaccharide Biosynthesis Protein SpsA, Chain A"/>
    <property type="match status" value="1"/>
</dbReference>
<dbReference type="HAMAP" id="MF_01631">
    <property type="entry name" value="GlmU"/>
    <property type="match status" value="1"/>
</dbReference>
<dbReference type="InterPro" id="IPR005882">
    <property type="entry name" value="Bifunctional_GlmU"/>
</dbReference>
<dbReference type="InterPro" id="IPR050065">
    <property type="entry name" value="GlmU-like"/>
</dbReference>
<dbReference type="InterPro" id="IPR038009">
    <property type="entry name" value="GlmU_C_LbH"/>
</dbReference>
<dbReference type="InterPro" id="IPR001451">
    <property type="entry name" value="Hexapep"/>
</dbReference>
<dbReference type="InterPro" id="IPR018357">
    <property type="entry name" value="Hexapep_transf_CS"/>
</dbReference>
<dbReference type="InterPro" id="IPR025877">
    <property type="entry name" value="MobA-like_NTP_Trfase"/>
</dbReference>
<dbReference type="InterPro" id="IPR029044">
    <property type="entry name" value="Nucleotide-diphossugar_trans"/>
</dbReference>
<dbReference type="InterPro" id="IPR011004">
    <property type="entry name" value="Trimer_LpxA-like_sf"/>
</dbReference>
<dbReference type="NCBIfam" id="TIGR01173">
    <property type="entry name" value="glmU"/>
    <property type="match status" value="1"/>
</dbReference>
<dbReference type="NCBIfam" id="NF010937">
    <property type="entry name" value="PRK14357.1"/>
    <property type="match status" value="1"/>
</dbReference>
<dbReference type="PANTHER" id="PTHR43584:SF3">
    <property type="entry name" value="BIFUNCTIONAL PROTEIN GLMU"/>
    <property type="match status" value="1"/>
</dbReference>
<dbReference type="PANTHER" id="PTHR43584">
    <property type="entry name" value="NUCLEOTIDYL TRANSFERASE"/>
    <property type="match status" value="1"/>
</dbReference>
<dbReference type="Pfam" id="PF00132">
    <property type="entry name" value="Hexapep"/>
    <property type="match status" value="1"/>
</dbReference>
<dbReference type="Pfam" id="PF12804">
    <property type="entry name" value="NTP_transf_3"/>
    <property type="match status" value="1"/>
</dbReference>
<dbReference type="SUPFAM" id="SSF53448">
    <property type="entry name" value="Nucleotide-diphospho-sugar transferases"/>
    <property type="match status" value="1"/>
</dbReference>
<dbReference type="SUPFAM" id="SSF51161">
    <property type="entry name" value="Trimeric LpxA-like enzymes"/>
    <property type="match status" value="1"/>
</dbReference>
<dbReference type="PROSITE" id="PS00101">
    <property type="entry name" value="HEXAPEP_TRANSFERASES"/>
    <property type="match status" value="1"/>
</dbReference>
<accession>Q9X1W4</accession>
<sequence>MRALVLAAGKGTRMKSKIPKVLHPLSGRPMIEWVIETAGKVAQKVGVVLGFEAELVRKALPEWVDVFVQGEQLGTAHAVMCAKDFIEPGDDVLILYGDVPLISENTLKRMIEEHRKGADVTILVADLEDPSGYGRVIQDGDKYRIIEDTDLPEELKSVTTINTGFYVFSGDFLLRALPEIKNENAKGEYYLTDAVNFAEKVRVVRTDDLLEITGVNTRKTLVWLEEQLRMRKIEELLENGVTILDPATTYIHYSVEIGMDTVIYPMTFIEGKSRVGENCEIGPMTRIVDCEIGNNVKITRSECFKSVIEDDVSVGPFARLREGTILKKSSKIGNFVEIKKSTIGEGTKAQHLSYIGDAFVGKNVNVGAGTITCNYDGKKKNPTFIEDGAFIGSNSSLVAPVRIGKGALIGAGSVITEDVPPYSLGLGRARQVVKEGWVLKKRKEE</sequence>
<proteinExistence type="inferred from homology"/>
<reference key="1">
    <citation type="journal article" date="1999" name="Nature">
        <title>Evidence for lateral gene transfer between Archaea and Bacteria from genome sequence of Thermotoga maritima.</title>
        <authorList>
            <person name="Nelson K.E."/>
            <person name="Clayton R.A."/>
            <person name="Gill S.R."/>
            <person name="Gwinn M.L."/>
            <person name="Dodson R.J."/>
            <person name="Haft D.H."/>
            <person name="Hickey E.K."/>
            <person name="Peterson J.D."/>
            <person name="Nelson W.C."/>
            <person name="Ketchum K.A."/>
            <person name="McDonald L.A."/>
            <person name="Utterback T.R."/>
            <person name="Malek J.A."/>
            <person name="Linher K.D."/>
            <person name="Garrett M.M."/>
            <person name="Stewart A.M."/>
            <person name="Cotton M.D."/>
            <person name="Pratt M.S."/>
            <person name="Phillips C.A."/>
            <person name="Richardson D.L."/>
            <person name="Heidelberg J.F."/>
            <person name="Sutton G.G."/>
            <person name="Fleischmann R.D."/>
            <person name="Eisen J.A."/>
            <person name="White O."/>
            <person name="Salzberg S.L."/>
            <person name="Smith H.O."/>
            <person name="Venter J.C."/>
            <person name="Fraser C.M."/>
        </authorList>
    </citation>
    <scope>NUCLEOTIDE SEQUENCE [LARGE SCALE GENOMIC DNA]</scope>
    <source>
        <strain>ATCC 43589 / DSM 3109 / JCM 10099 / NBRC 100826 / MSB8</strain>
    </source>
</reference>
<evidence type="ECO:0000255" key="1">
    <source>
        <dbReference type="HAMAP-Rule" id="MF_01631"/>
    </source>
</evidence>
<comment type="function">
    <text evidence="1">Catalyzes the last two sequential reactions in the de novo biosynthetic pathway for UDP-N-acetylglucosamine (UDP-GlcNAc). The C-terminal domain catalyzes the transfer of acetyl group from acetyl coenzyme A to glucosamine-1-phosphate (GlcN-1-P) to produce N-acetylglucosamine-1-phosphate (GlcNAc-1-P), which is converted into UDP-GlcNAc by the transfer of uridine 5-monophosphate (from uridine 5-triphosphate), a reaction catalyzed by the N-terminal domain.</text>
</comment>
<comment type="catalytic activity">
    <reaction evidence="1">
        <text>alpha-D-glucosamine 1-phosphate + acetyl-CoA = N-acetyl-alpha-D-glucosamine 1-phosphate + CoA + H(+)</text>
        <dbReference type="Rhea" id="RHEA:13725"/>
        <dbReference type="ChEBI" id="CHEBI:15378"/>
        <dbReference type="ChEBI" id="CHEBI:57287"/>
        <dbReference type="ChEBI" id="CHEBI:57288"/>
        <dbReference type="ChEBI" id="CHEBI:57776"/>
        <dbReference type="ChEBI" id="CHEBI:58516"/>
        <dbReference type="EC" id="2.3.1.157"/>
    </reaction>
</comment>
<comment type="catalytic activity">
    <reaction evidence="1">
        <text>N-acetyl-alpha-D-glucosamine 1-phosphate + UTP + H(+) = UDP-N-acetyl-alpha-D-glucosamine + diphosphate</text>
        <dbReference type="Rhea" id="RHEA:13509"/>
        <dbReference type="ChEBI" id="CHEBI:15378"/>
        <dbReference type="ChEBI" id="CHEBI:33019"/>
        <dbReference type="ChEBI" id="CHEBI:46398"/>
        <dbReference type="ChEBI" id="CHEBI:57705"/>
        <dbReference type="ChEBI" id="CHEBI:57776"/>
        <dbReference type="EC" id="2.7.7.23"/>
    </reaction>
</comment>
<comment type="cofactor">
    <cofactor evidence="1">
        <name>Mg(2+)</name>
        <dbReference type="ChEBI" id="CHEBI:18420"/>
    </cofactor>
    <text evidence="1">Binds 1 Mg(2+) ion per subunit.</text>
</comment>
<comment type="pathway">
    <text evidence="1">Nucleotide-sugar biosynthesis; UDP-N-acetyl-alpha-D-glucosamine biosynthesis; N-acetyl-alpha-D-glucosamine 1-phosphate from alpha-D-glucosamine 6-phosphate (route II): step 2/2.</text>
</comment>
<comment type="pathway">
    <text evidence="1">Nucleotide-sugar biosynthesis; UDP-N-acetyl-alpha-D-glucosamine biosynthesis; UDP-N-acetyl-alpha-D-glucosamine from N-acetyl-alpha-D-glucosamine 1-phosphate: step 1/1.</text>
</comment>
<comment type="pathway">
    <text evidence="1">Bacterial outer membrane biogenesis; LPS lipid A biosynthesis.</text>
</comment>
<comment type="subunit">
    <text evidence="1">Homotrimer.</text>
</comment>
<comment type="subcellular location">
    <subcellularLocation>
        <location evidence="1">Cytoplasm</location>
    </subcellularLocation>
</comment>
<comment type="similarity">
    <text evidence="1">In the N-terminal section; belongs to the N-acetylglucosamine-1-phosphate uridyltransferase family.</text>
</comment>
<comment type="similarity">
    <text evidence="1">In the C-terminal section; belongs to the transferase hexapeptide repeat family.</text>
</comment>
<name>GLMU_THEMA</name>
<keyword id="KW-0012">Acyltransferase</keyword>
<keyword id="KW-0133">Cell shape</keyword>
<keyword id="KW-0961">Cell wall biogenesis/degradation</keyword>
<keyword id="KW-0963">Cytoplasm</keyword>
<keyword id="KW-0460">Magnesium</keyword>
<keyword id="KW-0479">Metal-binding</keyword>
<keyword id="KW-0511">Multifunctional enzyme</keyword>
<keyword id="KW-0548">Nucleotidyltransferase</keyword>
<keyword id="KW-0573">Peptidoglycan synthesis</keyword>
<keyword id="KW-1185">Reference proteome</keyword>
<keyword id="KW-0677">Repeat</keyword>
<keyword id="KW-0808">Transferase</keyword>
<gene>
    <name evidence="1" type="primary">glmU</name>
    <name type="ordered locus">TM_1629</name>
</gene>
<protein>
    <recommendedName>
        <fullName evidence="1">Bifunctional protein GlmU</fullName>
    </recommendedName>
    <domain>
        <recommendedName>
            <fullName evidence="1">UDP-N-acetylglucosamine pyrophosphorylase</fullName>
            <ecNumber evidence="1">2.7.7.23</ecNumber>
        </recommendedName>
        <alternativeName>
            <fullName evidence="1">N-acetylglucosamine-1-phosphate uridyltransferase</fullName>
        </alternativeName>
    </domain>
    <domain>
        <recommendedName>
            <fullName evidence="1">Glucosamine-1-phosphate N-acetyltransferase</fullName>
            <ecNumber evidence="1">2.3.1.157</ecNumber>
        </recommendedName>
    </domain>
</protein>
<feature type="chain" id="PRO_0000233868" description="Bifunctional protein GlmU">
    <location>
        <begin position="1"/>
        <end position="445"/>
    </location>
</feature>
<feature type="region of interest" description="Pyrophosphorylase" evidence="1">
    <location>
        <begin position="1"/>
        <end position="218"/>
    </location>
</feature>
<feature type="region of interest" description="Linker" evidence="1">
    <location>
        <begin position="219"/>
        <end position="239"/>
    </location>
</feature>
<feature type="region of interest" description="N-acetyltransferase" evidence="1">
    <location>
        <begin position="240"/>
        <end position="445"/>
    </location>
</feature>
<feature type="active site" description="Proton acceptor" evidence="1">
    <location>
        <position position="351"/>
    </location>
</feature>
<feature type="binding site" evidence="1">
    <location>
        <begin position="6"/>
        <end position="9"/>
    </location>
    <ligand>
        <name>UDP-N-acetyl-alpha-D-glucosamine</name>
        <dbReference type="ChEBI" id="CHEBI:57705"/>
    </ligand>
</feature>
<feature type="binding site" evidence="1">
    <location>
        <position position="20"/>
    </location>
    <ligand>
        <name>UDP-N-acetyl-alpha-D-glucosamine</name>
        <dbReference type="ChEBI" id="CHEBI:57705"/>
    </ligand>
</feature>
<feature type="binding site" evidence="1">
    <location>
        <position position="69"/>
    </location>
    <ligand>
        <name>UDP-N-acetyl-alpha-D-glucosamine</name>
        <dbReference type="ChEBI" id="CHEBI:57705"/>
    </ligand>
</feature>
<feature type="binding site" evidence="1">
    <location>
        <begin position="74"/>
        <end position="75"/>
    </location>
    <ligand>
        <name>UDP-N-acetyl-alpha-D-glucosamine</name>
        <dbReference type="ChEBI" id="CHEBI:57705"/>
    </ligand>
</feature>
<feature type="binding site" evidence="1">
    <location>
        <begin position="96"/>
        <end position="98"/>
    </location>
    <ligand>
        <name>UDP-N-acetyl-alpha-D-glucosamine</name>
        <dbReference type="ChEBI" id="CHEBI:57705"/>
    </ligand>
</feature>
<feature type="binding site" evidence="1">
    <location>
        <position position="98"/>
    </location>
    <ligand>
        <name>Mg(2+)</name>
        <dbReference type="ChEBI" id="CHEBI:18420"/>
    </ligand>
</feature>
<feature type="binding site" evidence="1">
    <location>
        <position position="134"/>
    </location>
    <ligand>
        <name>UDP-N-acetyl-alpha-D-glucosamine</name>
        <dbReference type="ChEBI" id="CHEBI:57705"/>
    </ligand>
</feature>
<feature type="binding site" evidence="1">
    <location>
        <position position="147"/>
    </location>
    <ligand>
        <name>UDP-N-acetyl-alpha-D-glucosamine</name>
        <dbReference type="ChEBI" id="CHEBI:57705"/>
    </ligand>
</feature>
<feature type="binding site" evidence="1">
    <location>
        <position position="162"/>
    </location>
    <ligand>
        <name>UDP-N-acetyl-alpha-D-glucosamine</name>
        <dbReference type="ChEBI" id="CHEBI:57705"/>
    </ligand>
</feature>
<feature type="binding site" evidence="1">
    <location>
        <position position="216"/>
    </location>
    <ligand>
        <name>Mg(2+)</name>
        <dbReference type="ChEBI" id="CHEBI:18420"/>
    </ligand>
</feature>
<feature type="binding site" evidence="1">
    <location>
        <position position="216"/>
    </location>
    <ligand>
        <name>UDP-N-acetyl-alpha-D-glucosamine</name>
        <dbReference type="ChEBI" id="CHEBI:57705"/>
    </ligand>
</feature>
<feature type="binding site" evidence="1">
    <location>
        <position position="321"/>
    </location>
    <ligand>
        <name>UDP-N-acetyl-alpha-D-glucosamine</name>
        <dbReference type="ChEBI" id="CHEBI:57705"/>
    </ligand>
</feature>
<feature type="binding site" evidence="1">
    <location>
        <position position="339"/>
    </location>
    <ligand>
        <name>UDP-N-acetyl-alpha-D-glucosamine</name>
        <dbReference type="ChEBI" id="CHEBI:57705"/>
    </ligand>
</feature>
<feature type="binding site" evidence="1">
    <location>
        <position position="354"/>
    </location>
    <ligand>
        <name>UDP-N-acetyl-alpha-D-glucosamine</name>
        <dbReference type="ChEBI" id="CHEBI:57705"/>
    </ligand>
</feature>
<feature type="binding site" evidence="1">
    <location>
        <position position="365"/>
    </location>
    <ligand>
        <name>UDP-N-acetyl-alpha-D-glucosamine</name>
        <dbReference type="ChEBI" id="CHEBI:57705"/>
    </ligand>
</feature>
<feature type="binding site" evidence="1">
    <location>
        <position position="368"/>
    </location>
    <ligand>
        <name>acetyl-CoA</name>
        <dbReference type="ChEBI" id="CHEBI:57288"/>
    </ligand>
</feature>
<feature type="binding site" evidence="1">
    <location>
        <begin position="374"/>
        <end position="375"/>
    </location>
    <ligand>
        <name>acetyl-CoA</name>
        <dbReference type="ChEBI" id="CHEBI:57288"/>
    </ligand>
</feature>
<feature type="binding site" evidence="1">
    <location>
        <position position="393"/>
    </location>
    <ligand>
        <name>acetyl-CoA</name>
        <dbReference type="ChEBI" id="CHEBI:57288"/>
    </ligand>
</feature>
<feature type="binding site" evidence="1">
    <location>
        <position position="411"/>
    </location>
    <ligand>
        <name>acetyl-CoA</name>
        <dbReference type="ChEBI" id="CHEBI:57288"/>
    </ligand>
</feature>
<feature type="binding site" evidence="1">
    <location>
        <position position="428"/>
    </location>
    <ligand>
        <name>acetyl-CoA</name>
        <dbReference type="ChEBI" id="CHEBI:57288"/>
    </ligand>
</feature>
<organism>
    <name type="scientific">Thermotoga maritima (strain ATCC 43589 / DSM 3109 / JCM 10099 / NBRC 100826 / MSB8)</name>
    <dbReference type="NCBI Taxonomy" id="243274"/>
    <lineage>
        <taxon>Bacteria</taxon>
        <taxon>Thermotogati</taxon>
        <taxon>Thermotogota</taxon>
        <taxon>Thermotogae</taxon>
        <taxon>Thermotogales</taxon>
        <taxon>Thermotogaceae</taxon>
        <taxon>Thermotoga</taxon>
    </lineage>
</organism>